<comment type="function">
    <text evidence="4">Responsible for the reduction of the oxo group on the C-3 of 5alpha-androstane steroids. Catalyzes the conversion of dihydrotestosterone to its inactive form 5alpha-androstanediol, that does not bind androgen receptor/AR. Also converts androstanedione, a precursor of testosterone and estrone, to epiandrosterone. Does not function as an isomerase.</text>
</comment>
<comment type="catalytic activity">
    <reaction evidence="4">
        <text>a 3beta-hydroxysteroid + NADP(+) = a 3-oxosteroid + NADPH + H(+)</text>
        <dbReference type="Rhea" id="RHEA:34787"/>
        <dbReference type="ChEBI" id="CHEBI:15378"/>
        <dbReference type="ChEBI" id="CHEBI:36836"/>
        <dbReference type="ChEBI" id="CHEBI:47788"/>
        <dbReference type="ChEBI" id="CHEBI:57783"/>
        <dbReference type="ChEBI" id="CHEBI:58349"/>
        <dbReference type="EC" id="1.1.1.270"/>
    </reaction>
</comment>
<comment type="catalytic activity">
    <reaction evidence="4">
        <text>5alpha-androstane-3beta,17beta-diol + NADP(+) = 17beta-hydroxy-5alpha-androstan-3-one + NADPH + H(+)</text>
        <dbReference type="Rhea" id="RHEA:16297"/>
        <dbReference type="ChEBI" id="CHEBI:15378"/>
        <dbReference type="ChEBI" id="CHEBI:16330"/>
        <dbReference type="ChEBI" id="CHEBI:18329"/>
        <dbReference type="ChEBI" id="CHEBI:57783"/>
        <dbReference type="ChEBI" id="CHEBI:58349"/>
        <dbReference type="EC" id="1.1.1.210"/>
    </reaction>
</comment>
<comment type="catalytic activity">
    <reaction evidence="4">
        <text>3beta-hydroxy-5alpha-androstan-17-one + NADP(+) = 5alpha-androstan-3,17-dione + NADPH + H(+)</text>
        <dbReference type="Rhea" id="RHEA:56916"/>
        <dbReference type="ChEBI" id="CHEBI:15378"/>
        <dbReference type="ChEBI" id="CHEBI:15994"/>
        <dbReference type="ChEBI" id="CHEBI:57783"/>
        <dbReference type="ChEBI" id="CHEBI:58349"/>
        <dbReference type="ChEBI" id="CHEBI:541975"/>
    </reaction>
</comment>
<comment type="biophysicochemical properties">
    <kinetics>
        <KM evidence="4">0.12 uM for dihydrotestosterone (in the presence of NADPH)</KM>
        <KM evidence="4">6.16 uM for dihydrotestosterone (in the presence of NADH)</KM>
        <text evidence="4">Catalytic efficiency for dihydrotestosterone reduction is 20-fold better in the presence of NADPH than in the presence of NADH.</text>
    </kinetics>
</comment>
<comment type="pathway">
    <text evidence="4">Steroid metabolism.</text>
</comment>
<comment type="subcellular location">
    <subcellularLocation>
        <location>Endoplasmic reticulum membrane</location>
        <topology>Single-pass membrane protein</topology>
    </subcellularLocation>
    <subcellularLocation>
        <location>Mitochondrion membrane</location>
        <topology>Single-pass membrane protein</topology>
    </subcellularLocation>
</comment>
<comment type="tissue specificity">
    <text evidence="5">Expressed predominantly in male liver.</text>
</comment>
<comment type="similarity">
    <text evidence="6">Belongs to the 3-beta-HSD family.</text>
</comment>
<proteinExistence type="evidence at protein level"/>
<name>3BHS5_RAT</name>
<keyword id="KW-0007">Acetylation</keyword>
<keyword id="KW-0256">Endoplasmic reticulum</keyword>
<keyword id="KW-0443">Lipid metabolism</keyword>
<keyword id="KW-0472">Membrane</keyword>
<keyword id="KW-0496">Mitochondrion</keyword>
<keyword id="KW-0521">NADP</keyword>
<keyword id="KW-0560">Oxidoreductase</keyword>
<keyword id="KW-1185">Reference proteome</keyword>
<keyword id="KW-0753">Steroid metabolism</keyword>
<keyword id="KW-0812">Transmembrane</keyword>
<keyword id="KW-1133">Transmembrane helix</keyword>
<protein>
    <recommendedName>
        <fullName evidence="7">NADPH-dependent 3-keto-steroid reductase Hsd3b5</fullName>
    </recommendedName>
    <alternativeName>
        <fullName>3 beta-hydroxysteroid dehydrogenase type 3</fullName>
    </alternativeName>
    <alternativeName>
        <fullName evidence="7">3 beta-hydroxysteroid dehydrogenase type III</fullName>
        <shortName>3 beta-HSD III</shortName>
        <ecNumber evidence="4">1.1.1.270</ecNumber>
    </alternativeName>
    <alternativeName>
        <fullName evidence="7">Dihydrotestosterone 3-ketoreductase</fullName>
        <ecNumber evidence="4">1.1.1.210</ecNumber>
    </alternativeName>
</protein>
<accession>P27364</accession>
<accession>Q569C6</accession>
<sequence length="373" mass="42206">MPGWSCLVTGAGGFLGQRIVQMLVQEKELQEVRVLYRTFSPKHKEELSKLQTKAKVTVLRGDIVDAQFLRRACQGMSVIIHTAAALDIAGFLPRQTILDVNVKGTQLLLDACVEASVPAFIYSSSTGVAGPNSYKETILNDREEEHRESTWSNPYPYSKRMAEKAVLAANGSILKNGGTFHTCALRLPFIYGEESQIISTMVNRALKNNSIIKRHATFSIANPVYVGNAAWAHILAARGLRDPEKSQSIQGQFYYISDDTPHQSYDDLNYTLSKEWGFCLDSSWSLPLPLLYWLAFLLETVSFLLRPFYNYRPPFNRFMVTILNSVFTISYKKAQRDLGYEPLVSWEEAKQKTSEWIGTLVEQHRETLDTKSQ</sequence>
<dbReference type="EC" id="1.1.1.270" evidence="4"/>
<dbReference type="EC" id="1.1.1.210" evidence="4"/>
<dbReference type="EMBL" id="M67465">
    <property type="protein sequence ID" value="AAA41352.1"/>
    <property type="molecule type" value="mRNA"/>
</dbReference>
<dbReference type="EMBL" id="BC092571">
    <property type="protein sequence ID" value="AAH92571.1"/>
    <property type="molecule type" value="mRNA"/>
</dbReference>
<dbReference type="PIR" id="A37404">
    <property type="entry name" value="A37404"/>
</dbReference>
<dbReference type="RefSeq" id="NP_036716.1">
    <property type="nucleotide sequence ID" value="NM_012584.1"/>
</dbReference>
<dbReference type="SMR" id="P27364"/>
<dbReference type="FunCoup" id="P27364">
    <property type="interactions" value="9"/>
</dbReference>
<dbReference type="STRING" id="10116.ENSRNOP00000072555"/>
<dbReference type="CarbonylDB" id="P27364"/>
<dbReference type="iPTMnet" id="P27364"/>
<dbReference type="PhosphoSitePlus" id="P27364"/>
<dbReference type="PaxDb" id="10116-ENSRNOP00000026290"/>
<dbReference type="GeneID" id="24470"/>
<dbReference type="KEGG" id="rno:24470"/>
<dbReference type="UCSC" id="RGD:2838">
    <property type="organism name" value="rat"/>
</dbReference>
<dbReference type="AGR" id="RGD:2838"/>
<dbReference type="CTD" id="15496"/>
<dbReference type="RGD" id="2838">
    <property type="gene designation" value="Hsd3b5"/>
</dbReference>
<dbReference type="eggNOG" id="KOG1430">
    <property type="taxonomic scope" value="Eukaryota"/>
</dbReference>
<dbReference type="InParanoid" id="P27364"/>
<dbReference type="OrthoDB" id="1925334at2759"/>
<dbReference type="PhylomeDB" id="P27364"/>
<dbReference type="TreeFam" id="TF343138"/>
<dbReference type="Reactome" id="R-RNO-193048">
    <property type="pathway name" value="Androgen biosynthesis"/>
</dbReference>
<dbReference type="Reactome" id="R-RNO-193993">
    <property type="pathway name" value="Mineralocorticoid biosynthesis"/>
</dbReference>
<dbReference type="Reactome" id="R-RNO-194002">
    <property type="pathway name" value="Glucocorticoid biosynthesis"/>
</dbReference>
<dbReference type="PRO" id="PR:P27364"/>
<dbReference type="Proteomes" id="UP000002494">
    <property type="component" value="Unplaced"/>
</dbReference>
<dbReference type="GO" id="GO:0005737">
    <property type="term" value="C:cytoplasm"/>
    <property type="evidence" value="ECO:0000318"/>
    <property type="project" value="GO_Central"/>
</dbReference>
<dbReference type="GO" id="GO:0005789">
    <property type="term" value="C:endoplasmic reticulum membrane"/>
    <property type="evidence" value="ECO:0007669"/>
    <property type="project" value="UniProtKB-SubCell"/>
</dbReference>
<dbReference type="GO" id="GO:0043231">
    <property type="term" value="C:intracellular membrane-bounded organelle"/>
    <property type="evidence" value="ECO:0000318"/>
    <property type="project" value="GO_Central"/>
</dbReference>
<dbReference type="GO" id="GO:0031966">
    <property type="term" value="C:mitochondrial membrane"/>
    <property type="evidence" value="ECO:0007669"/>
    <property type="project" value="UniProtKB-SubCell"/>
</dbReference>
<dbReference type="GO" id="GO:0003854">
    <property type="term" value="F:3-beta-hydroxy-Delta5-steroid dehydrogenase (NAD+) activity"/>
    <property type="evidence" value="ECO:0000314"/>
    <property type="project" value="RGD"/>
</dbReference>
<dbReference type="GO" id="GO:0000253">
    <property type="term" value="F:3-beta-hydroxysteroid 3-dehydrogenase (NADP+) activity"/>
    <property type="evidence" value="ECO:0007669"/>
    <property type="project" value="UniProtKB-EC"/>
</dbReference>
<dbReference type="GO" id="GO:0047024">
    <property type="term" value="F:5-alpha-androstane-3-beta,17-beta-diol dehydrogenase (NADP+) activity"/>
    <property type="evidence" value="ECO:0007669"/>
    <property type="project" value="UniProtKB-EC"/>
</dbReference>
<dbReference type="GO" id="GO:0016616">
    <property type="term" value="F:oxidoreductase activity, acting on the CH-OH group of donors, NAD or NADP as acceptor"/>
    <property type="evidence" value="ECO:0000318"/>
    <property type="project" value="GO_Central"/>
</dbReference>
<dbReference type="GO" id="GO:0005496">
    <property type="term" value="F:steroid binding"/>
    <property type="evidence" value="ECO:0000314"/>
    <property type="project" value="RGD"/>
</dbReference>
<dbReference type="GO" id="GO:0016229">
    <property type="term" value="F:steroid dehydrogenase activity"/>
    <property type="evidence" value="ECO:0000304"/>
    <property type="project" value="RGD"/>
</dbReference>
<dbReference type="GO" id="GO:0008207">
    <property type="term" value="P:C21-steroid hormone metabolic process"/>
    <property type="evidence" value="ECO:0000318"/>
    <property type="project" value="GO_Central"/>
</dbReference>
<dbReference type="GO" id="GO:0042448">
    <property type="term" value="P:progesterone metabolic process"/>
    <property type="evidence" value="ECO:0000314"/>
    <property type="project" value="RGD"/>
</dbReference>
<dbReference type="GO" id="GO:0050810">
    <property type="term" value="P:regulation of steroid biosynthetic process"/>
    <property type="evidence" value="ECO:0000314"/>
    <property type="project" value="RGD"/>
</dbReference>
<dbReference type="GO" id="GO:0006694">
    <property type="term" value="P:steroid biosynthetic process"/>
    <property type="evidence" value="ECO:0000314"/>
    <property type="project" value="RGD"/>
</dbReference>
<dbReference type="FunFam" id="3.40.50.720:FF:000220">
    <property type="entry name" value="3 beta-hydroxysteroid dehydrogenase/Delta 5--&gt;4-isomerase type 1"/>
    <property type="match status" value="1"/>
</dbReference>
<dbReference type="Gene3D" id="3.40.50.720">
    <property type="entry name" value="NAD(P)-binding Rossmann-like Domain"/>
    <property type="match status" value="1"/>
</dbReference>
<dbReference type="InterPro" id="IPR002225">
    <property type="entry name" value="3Beta_OHSteriod_DH/Estase"/>
</dbReference>
<dbReference type="InterPro" id="IPR050177">
    <property type="entry name" value="Lipid_A_modif_metabolic_enz"/>
</dbReference>
<dbReference type="InterPro" id="IPR036291">
    <property type="entry name" value="NAD(P)-bd_dom_sf"/>
</dbReference>
<dbReference type="PANTHER" id="PTHR43245">
    <property type="entry name" value="BIFUNCTIONAL POLYMYXIN RESISTANCE PROTEIN ARNA"/>
    <property type="match status" value="1"/>
</dbReference>
<dbReference type="PANTHER" id="PTHR43245:SF51">
    <property type="entry name" value="SHORT CHAIN DEHYDROGENASE_REDUCTASE FAMILY 42E, MEMBER 2"/>
    <property type="match status" value="1"/>
</dbReference>
<dbReference type="Pfam" id="PF01073">
    <property type="entry name" value="3Beta_HSD"/>
    <property type="match status" value="1"/>
</dbReference>
<dbReference type="SUPFAM" id="SSF51735">
    <property type="entry name" value="NAD(P)-binding Rossmann-fold domains"/>
    <property type="match status" value="1"/>
</dbReference>
<evidence type="ECO:0000250" key="1">
    <source>
        <dbReference type="UniProtKB" id="Q12068"/>
    </source>
</evidence>
<evidence type="ECO:0000250" key="2">
    <source>
        <dbReference type="UniProtKB" id="Q61694"/>
    </source>
</evidence>
<evidence type="ECO:0000255" key="3"/>
<evidence type="ECO:0000269" key="4">
    <source>
    </source>
</evidence>
<evidence type="ECO:0000269" key="5">
    <source>
    </source>
</evidence>
<evidence type="ECO:0000305" key="6"/>
<evidence type="ECO:0000305" key="7">
    <source>
    </source>
</evidence>
<evidence type="ECO:0000312" key="8">
    <source>
        <dbReference type="RGD" id="2838"/>
    </source>
</evidence>
<organism>
    <name type="scientific">Rattus norvegicus</name>
    <name type="common">Rat</name>
    <dbReference type="NCBI Taxonomy" id="10116"/>
    <lineage>
        <taxon>Eukaryota</taxon>
        <taxon>Metazoa</taxon>
        <taxon>Chordata</taxon>
        <taxon>Craniata</taxon>
        <taxon>Vertebrata</taxon>
        <taxon>Euteleostomi</taxon>
        <taxon>Mammalia</taxon>
        <taxon>Eutheria</taxon>
        <taxon>Euarchontoglires</taxon>
        <taxon>Glires</taxon>
        <taxon>Rodentia</taxon>
        <taxon>Myomorpha</taxon>
        <taxon>Muroidea</taxon>
        <taxon>Muridae</taxon>
        <taxon>Murinae</taxon>
        <taxon>Rattus</taxon>
    </lineage>
</organism>
<feature type="chain" id="PRO_0000087789" description="NADPH-dependent 3-keto-steroid reductase Hsd3b5">
    <location>
        <begin position="1"/>
        <end position="373"/>
    </location>
</feature>
<feature type="transmembrane region" description="Helical" evidence="3">
    <location>
        <begin position="288"/>
        <end position="308"/>
    </location>
</feature>
<feature type="active site" description="Proton donor" evidence="1">
    <location>
        <position position="159"/>
    </location>
</feature>
<feature type="binding site" evidence="1">
    <location>
        <begin position="10"/>
        <end position="15"/>
    </location>
    <ligand>
        <name>NADP(+)</name>
        <dbReference type="ChEBI" id="CHEBI:58349"/>
    </ligand>
</feature>
<feature type="binding site" evidence="1">
    <location>
        <position position="155"/>
    </location>
    <ligand>
        <name>NADP(+)</name>
        <dbReference type="ChEBI" id="CHEBI:58349"/>
    </ligand>
</feature>
<feature type="binding site" evidence="1">
    <location>
        <position position="159"/>
    </location>
    <ligand>
        <name>NADP(+)</name>
        <dbReference type="ChEBI" id="CHEBI:58349"/>
    </ligand>
</feature>
<feature type="modified residue" description="N6-acetyllysine" evidence="2">
    <location>
        <position position="350"/>
    </location>
</feature>
<feature type="sequence conflict" description="In Ref. 2; AAH92571." evidence="6" ref="2">
    <original>F</original>
    <variation>L</variation>
    <location>
        <position position="180"/>
    </location>
</feature>
<feature type="sequence conflict" description="In Ref. 2; AAH92571." evidence="6" ref="2">
    <original>R</original>
    <variation>T</variation>
    <location>
        <position position="204"/>
    </location>
</feature>
<reference key="1">
    <citation type="journal article" date="1990" name="Endocrinology">
        <title>Structure and sexual dimorphic expression of a liver-specific rat 3 beta-hydroxysteroid dehydrogenase/isomerase.</title>
        <authorList>
            <person name="Zhao H.-F."/>
            <person name="Rheaume E."/>
            <person name="Trudel C."/>
            <person name="Couet J."/>
            <person name="Labrie F."/>
            <person name="Simard J."/>
        </authorList>
    </citation>
    <scope>NUCLEOTIDE SEQUENCE [MRNA]</scope>
    <scope>TISSUE SPECIFICITY</scope>
    <source>
        <tissue>Liver</tissue>
    </source>
</reference>
<reference key="2">
    <citation type="journal article" date="2004" name="Genome Res.">
        <title>The status, quality, and expansion of the NIH full-length cDNA project: the Mammalian Gene Collection (MGC).</title>
        <authorList>
            <consortium name="The MGC Project Team"/>
        </authorList>
    </citation>
    <scope>NUCLEOTIDE SEQUENCE [LARGE SCALE MRNA]</scope>
    <source>
        <tissue>Liver</tissue>
    </source>
</reference>
<reference key="3">
    <citation type="journal article" date="1992" name="J. Biol. Chem.">
        <title>Expression of liver-specific member of the 3 beta-hydroxysteroid dehydrogenase family, an isoform possessing an almost exclusive 3-ketosteroid reductase activity.</title>
        <authorList>
            <person name="de Launoit Y."/>
            <person name="Zhao H.F."/>
            <person name="Belanger A."/>
            <person name="Labrie F."/>
            <person name="Simard J."/>
        </authorList>
    </citation>
    <scope>FUNCTION</scope>
    <scope>CATALYTIC ACTIVITY</scope>
    <scope>BIOPHYSICOCHEMICAL PROPERTIES</scope>
    <scope>SUBSTRATE SPECIFICITY</scope>
    <scope>PATHWAY</scope>
</reference>
<gene>
    <name evidence="8" type="primary">Hsd3b5</name>
    <name type="synonym">Hsd3b</name>
</gene>